<accession>Q7VMC9</accession>
<name>SYM_HAEDU</name>
<evidence type="ECO:0000255" key="1">
    <source>
        <dbReference type="HAMAP-Rule" id="MF_00098"/>
    </source>
</evidence>
<protein>
    <recommendedName>
        <fullName evidence="1">Methionine--tRNA ligase</fullName>
        <ecNumber evidence="1">6.1.1.10</ecNumber>
    </recommendedName>
    <alternativeName>
        <fullName evidence="1">Methionyl-tRNA synthetase</fullName>
        <shortName evidence="1">MetRS</shortName>
    </alternativeName>
</protein>
<proteinExistence type="inferred from homology"/>
<organism>
    <name type="scientific">Haemophilus ducreyi (strain 35000HP / ATCC 700724)</name>
    <dbReference type="NCBI Taxonomy" id="233412"/>
    <lineage>
        <taxon>Bacteria</taxon>
        <taxon>Pseudomonadati</taxon>
        <taxon>Pseudomonadota</taxon>
        <taxon>Gammaproteobacteria</taxon>
        <taxon>Pasteurellales</taxon>
        <taxon>Pasteurellaceae</taxon>
        <taxon>Haemophilus</taxon>
    </lineage>
</organism>
<feature type="chain" id="PRO_0000139134" description="Methionine--tRNA ligase">
    <location>
        <begin position="1"/>
        <end position="684"/>
    </location>
</feature>
<feature type="domain" description="tRNA-binding" evidence="1">
    <location>
        <begin position="582"/>
        <end position="684"/>
    </location>
</feature>
<feature type="short sequence motif" description="'HIGH' region">
    <location>
        <begin position="14"/>
        <end position="24"/>
    </location>
</feature>
<feature type="short sequence motif" description="'KMSKS' region">
    <location>
        <begin position="330"/>
        <end position="334"/>
    </location>
</feature>
<feature type="binding site" evidence="1">
    <location>
        <position position="145"/>
    </location>
    <ligand>
        <name>Zn(2+)</name>
        <dbReference type="ChEBI" id="CHEBI:29105"/>
    </ligand>
</feature>
<feature type="binding site" evidence="1">
    <location>
        <position position="148"/>
    </location>
    <ligand>
        <name>Zn(2+)</name>
        <dbReference type="ChEBI" id="CHEBI:29105"/>
    </ligand>
</feature>
<feature type="binding site" evidence="1">
    <location>
        <position position="158"/>
    </location>
    <ligand>
        <name>Zn(2+)</name>
        <dbReference type="ChEBI" id="CHEBI:29105"/>
    </ligand>
</feature>
<feature type="binding site" evidence="1">
    <location>
        <position position="161"/>
    </location>
    <ligand>
        <name>Zn(2+)</name>
        <dbReference type="ChEBI" id="CHEBI:29105"/>
    </ligand>
</feature>
<feature type="binding site" evidence="1">
    <location>
        <position position="333"/>
    </location>
    <ligand>
        <name>ATP</name>
        <dbReference type="ChEBI" id="CHEBI:30616"/>
    </ligand>
</feature>
<comment type="function">
    <text evidence="1">Is required not only for elongation of protein synthesis but also for the initiation of all mRNA translation through initiator tRNA(fMet) aminoacylation.</text>
</comment>
<comment type="catalytic activity">
    <reaction evidence="1">
        <text>tRNA(Met) + L-methionine + ATP = L-methionyl-tRNA(Met) + AMP + diphosphate</text>
        <dbReference type="Rhea" id="RHEA:13481"/>
        <dbReference type="Rhea" id="RHEA-COMP:9667"/>
        <dbReference type="Rhea" id="RHEA-COMP:9698"/>
        <dbReference type="ChEBI" id="CHEBI:30616"/>
        <dbReference type="ChEBI" id="CHEBI:33019"/>
        <dbReference type="ChEBI" id="CHEBI:57844"/>
        <dbReference type="ChEBI" id="CHEBI:78442"/>
        <dbReference type="ChEBI" id="CHEBI:78530"/>
        <dbReference type="ChEBI" id="CHEBI:456215"/>
        <dbReference type="EC" id="6.1.1.10"/>
    </reaction>
</comment>
<comment type="cofactor">
    <cofactor evidence="1">
        <name>Zn(2+)</name>
        <dbReference type="ChEBI" id="CHEBI:29105"/>
    </cofactor>
    <text evidence="1">Binds 1 zinc ion per subunit.</text>
</comment>
<comment type="subunit">
    <text evidence="1">Homodimer.</text>
</comment>
<comment type="subcellular location">
    <subcellularLocation>
        <location evidence="1">Cytoplasm</location>
    </subcellularLocation>
</comment>
<comment type="similarity">
    <text evidence="1">Belongs to the class-I aminoacyl-tRNA synthetase family. MetG type 1 subfamily.</text>
</comment>
<gene>
    <name evidence="1" type="primary">metG</name>
    <name type="ordered locus">HD_1054</name>
</gene>
<keyword id="KW-0030">Aminoacyl-tRNA synthetase</keyword>
<keyword id="KW-0067">ATP-binding</keyword>
<keyword id="KW-0963">Cytoplasm</keyword>
<keyword id="KW-0436">Ligase</keyword>
<keyword id="KW-0479">Metal-binding</keyword>
<keyword id="KW-0547">Nucleotide-binding</keyword>
<keyword id="KW-0648">Protein biosynthesis</keyword>
<keyword id="KW-1185">Reference proteome</keyword>
<keyword id="KW-0694">RNA-binding</keyword>
<keyword id="KW-0820">tRNA-binding</keyword>
<keyword id="KW-0862">Zinc</keyword>
<dbReference type="EC" id="6.1.1.10" evidence="1"/>
<dbReference type="EMBL" id="AE017143">
    <property type="protein sequence ID" value="AAP95928.1"/>
    <property type="molecule type" value="Genomic_DNA"/>
</dbReference>
<dbReference type="RefSeq" id="WP_010944977.1">
    <property type="nucleotide sequence ID" value="NC_002940.2"/>
</dbReference>
<dbReference type="SMR" id="Q7VMC9"/>
<dbReference type="STRING" id="233412.HD_1054"/>
<dbReference type="KEGG" id="hdu:HD_1054"/>
<dbReference type="eggNOG" id="COG0073">
    <property type="taxonomic scope" value="Bacteria"/>
</dbReference>
<dbReference type="eggNOG" id="COG0143">
    <property type="taxonomic scope" value="Bacteria"/>
</dbReference>
<dbReference type="HOGENOM" id="CLU_009710_7_0_6"/>
<dbReference type="OrthoDB" id="9810191at2"/>
<dbReference type="Proteomes" id="UP000001022">
    <property type="component" value="Chromosome"/>
</dbReference>
<dbReference type="GO" id="GO:0005829">
    <property type="term" value="C:cytosol"/>
    <property type="evidence" value="ECO:0007669"/>
    <property type="project" value="TreeGrafter"/>
</dbReference>
<dbReference type="GO" id="GO:0005524">
    <property type="term" value="F:ATP binding"/>
    <property type="evidence" value="ECO:0007669"/>
    <property type="project" value="UniProtKB-UniRule"/>
</dbReference>
<dbReference type="GO" id="GO:0046872">
    <property type="term" value="F:metal ion binding"/>
    <property type="evidence" value="ECO:0007669"/>
    <property type="project" value="UniProtKB-KW"/>
</dbReference>
<dbReference type="GO" id="GO:0004825">
    <property type="term" value="F:methionine-tRNA ligase activity"/>
    <property type="evidence" value="ECO:0007669"/>
    <property type="project" value="UniProtKB-UniRule"/>
</dbReference>
<dbReference type="GO" id="GO:0000049">
    <property type="term" value="F:tRNA binding"/>
    <property type="evidence" value="ECO:0007669"/>
    <property type="project" value="UniProtKB-KW"/>
</dbReference>
<dbReference type="GO" id="GO:0006431">
    <property type="term" value="P:methionyl-tRNA aminoacylation"/>
    <property type="evidence" value="ECO:0007669"/>
    <property type="project" value="UniProtKB-UniRule"/>
</dbReference>
<dbReference type="CDD" id="cd07957">
    <property type="entry name" value="Anticodon_Ia_Met"/>
    <property type="match status" value="1"/>
</dbReference>
<dbReference type="CDD" id="cd00814">
    <property type="entry name" value="MetRS_core"/>
    <property type="match status" value="1"/>
</dbReference>
<dbReference type="CDD" id="cd02800">
    <property type="entry name" value="tRNA_bind_EcMetRS_like"/>
    <property type="match status" value="1"/>
</dbReference>
<dbReference type="FunFam" id="1.10.730.10:FF:000005">
    <property type="entry name" value="Methionine--tRNA ligase"/>
    <property type="match status" value="1"/>
</dbReference>
<dbReference type="FunFam" id="2.20.28.20:FF:000001">
    <property type="entry name" value="Methionine--tRNA ligase"/>
    <property type="match status" value="1"/>
</dbReference>
<dbReference type="FunFam" id="2.40.50.140:FF:000042">
    <property type="entry name" value="Methionine--tRNA ligase"/>
    <property type="match status" value="1"/>
</dbReference>
<dbReference type="Gene3D" id="3.40.50.620">
    <property type="entry name" value="HUPs"/>
    <property type="match status" value="1"/>
</dbReference>
<dbReference type="Gene3D" id="1.10.730.10">
    <property type="entry name" value="Isoleucyl-tRNA Synthetase, Domain 1"/>
    <property type="match status" value="1"/>
</dbReference>
<dbReference type="Gene3D" id="2.20.28.20">
    <property type="entry name" value="Methionyl-tRNA synthetase, Zn-domain"/>
    <property type="match status" value="1"/>
</dbReference>
<dbReference type="Gene3D" id="2.40.50.140">
    <property type="entry name" value="Nucleic acid-binding proteins"/>
    <property type="match status" value="1"/>
</dbReference>
<dbReference type="HAMAP" id="MF_00098">
    <property type="entry name" value="Met_tRNA_synth_type1"/>
    <property type="match status" value="1"/>
</dbReference>
<dbReference type="InterPro" id="IPR001412">
    <property type="entry name" value="aa-tRNA-synth_I_CS"/>
</dbReference>
<dbReference type="InterPro" id="IPR041872">
    <property type="entry name" value="Anticodon_Met"/>
</dbReference>
<dbReference type="InterPro" id="IPR004495">
    <property type="entry name" value="Met-tRNA-synth_bsu_C"/>
</dbReference>
<dbReference type="InterPro" id="IPR023458">
    <property type="entry name" value="Met-tRNA_ligase_1"/>
</dbReference>
<dbReference type="InterPro" id="IPR014758">
    <property type="entry name" value="Met-tRNA_synth"/>
</dbReference>
<dbReference type="InterPro" id="IPR015413">
    <property type="entry name" value="Methionyl/Leucyl_tRNA_Synth"/>
</dbReference>
<dbReference type="InterPro" id="IPR033911">
    <property type="entry name" value="MetRS_core"/>
</dbReference>
<dbReference type="InterPro" id="IPR029038">
    <property type="entry name" value="MetRS_Zn"/>
</dbReference>
<dbReference type="InterPro" id="IPR012340">
    <property type="entry name" value="NA-bd_OB-fold"/>
</dbReference>
<dbReference type="InterPro" id="IPR014729">
    <property type="entry name" value="Rossmann-like_a/b/a_fold"/>
</dbReference>
<dbReference type="InterPro" id="IPR002547">
    <property type="entry name" value="tRNA-bd_dom"/>
</dbReference>
<dbReference type="InterPro" id="IPR009080">
    <property type="entry name" value="tRNAsynth_Ia_anticodon-bd"/>
</dbReference>
<dbReference type="NCBIfam" id="TIGR00398">
    <property type="entry name" value="metG"/>
    <property type="match status" value="1"/>
</dbReference>
<dbReference type="NCBIfam" id="TIGR00399">
    <property type="entry name" value="metG_C_term"/>
    <property type="match status" value="1"/>
</dbReference>
<dbReference type="NCBIfam" id="NF001100">
    <property type="entry name" value="PRK00133.1"/>
    <property type="match status" value="1"/>
</dbReference>
<dbReference type="PANTHER" id="PTHR45765">
    <property type="entry name" value="METHIONINE--TRNA LIGASE"/>
    <property type="match status" value="1"/>
</dbReference>
<dbReference type="PANTHER" id="PTHR45765:SF1">
    <property type="entry name" value="METHIONINE--TRNA LIGASE, CYTOPLASMIC"/>
    <property type="match status" value="1"/>
</dbReference>
<dbReference type="Pfam" id="PF19303">
    <property type="entry name" value="Anticodon_3"/>
    <property type="match status" value="1"/>
</dbReference>
<dbReference type="Pfam" id="PF09334">
    <property type="entry name" value="tRNA-synt_1g"/>
    <property type="match status" value="1"/>
</dbReference>
<dbReference type="Pfam" id="PF01588">
    <property type="entry name" value="tRNA_bind"/>
    <property type="match status" value="1"/>
</dbReference>
<dbReference type="PRINTS" id="PR01041">
    <property type="entry name" value="TRNASYNTHMET"/>
</dbReference>
<dbReference type="SUPFAM" id="SSF47323">
    <property type="entry name" value="Anticodon-binding domain of a subclass of class I aminoacyl-tRNA synthetases"/>
    <property type="match status" value="1"/>
</dbReference>
<dbReference type="SUPFAM" id="SSF57770">
    <property type="entry name" value="Methionyl-tRNA synthetase (MetRS), Zn-domain"/>
    <property type="match status" value="1"/>
</dbReference>
<dbReference type="SUPFAM" id="SSF50249">
    <property type="entry name" value="Nucleic acid-binding proteins"/>
    <property type="match status" value="1"/>
</dbReference>
<dbReference type="SUPFAM" id="SSF52374">
    <property type="entry name" value="Nucleotidylyl transferase"/>
    <property type="match status" value="1"/>
</dbReference>
<dbReference type="PROSITE" id="PS00178">
    <property type="entry name" value="AA_TRNA_LIGASE_I"/>
    <property type="match status" value="1"/>
</dbReference>
<dbReference type="PROSITE" id="PS50886">
    <property type="entry name" value="TRBD"/>
    <property type="match status" value="1"/>
</dbReference>
<reference key="1">
    <citation type="submission" date="2003-06" db="EMBL/GenBank/DDBJ databases">
        <title>The complete genome sequence of Haemophilus ducreyi.</title>
        <authorList>
            <person name="Munson R.S. Jr."/>
            <person name="Ray W.C."/>
            <person name="Mahairas G."/>
            <person name="Sabo P."/>
            <person name="Mungur R."/>
            <person name="Johnson L."/>
            <person name="Nguyen D."/>
            <person name="Wang J."/>
            <person name="Forst C."/>
            <person name="Hood L."/>
        </authorList>
    </citation>
    <scope>NUCLEOTIDE SEQUENCE [LARGE SCALE GENOMIC DNA]</scope>
    <source>
        <strain>35000HP / ATCC 700724</strain>
    </source>
</reference>
<sequence length="684" mass="77814">MSNKRKMLVTCALPYANGAIHLGHMLEHIQADIWVRFQRMRGHQVYFVCADDAHGTPIMLNAAKQGITPEQLIAKAKADHIADFQSFNISFDNYHSTHSEENRNITTAMYKTLRDKGLIKTRVISQLFDPEKQMFLPDRFVKGTCPKCQAEDQYGDNCEVCASTYSPMDLINPHSVVSGATPIVKQSEHFFFDLPNFEAMLKTWTHSGSLQPQIANKMQEWFESGLQQWDISRDAPYFGFPIPDTENKFFYVWLDAPIGYMASFKNLCDRTGLNYEEFWQKESKTELYHFIGKDIVYFHSLFWPAMLEGCDQRKPTNIFAHGYVTVDGVKMSKSRGTFIQASTYLKHIDPECLRYYYAAKLNERIEDLDLNLDDFVQRVNSDIVNKLVNLASRNASFITKRFAGNLADKLEDEALFAEFVAQASNIADHYEAREYNKAIRLIMDLCDKANKYVDDKAPWVIAKQADREAELHAVCSMGIELFRILISYLKPVLPQLATRAEAFLQTELRWDNIASPLLNQNVAPFKSLFSRLEKKQIDRVIEETKALFSTQPKTEQPQVASTMNDNQQQNIEPIAAEISIDDFAKLDLRVAKVIQCEAVPESNKLLKFQLDLGDHQRQVLSGIKAAYSKPEELNGRFVIMVANLAPRKMKFGLSEGMILSAGTGGADLFLLSGDCGIRPGMQVK</sequence>